<accession>Q4FLK5</accession>
<comment type="function">
    <text evidence="2">GTP hydrolase that promotes the GTP-dependent binding of aminoacyl-tRNA to the A-site of ribosomes during protein biosynthesis.</text>
</comment>
<comment type="catalytic activity">
    <reaction evidence="2">
        <text>GTP + H2O = GDP + phosphate + H(+)</text>
        <dbReference type="Rhea" id="RHEA:19669"/>
        <dbReference type="ChEBI" id="CHEBI:15377"/>
        <dbReference type="ChEBI" id="CHEBI:15378"/>
        <dbReference type="ChEBI" id="CHEBI:37565"/>
        <dbReference type="ChEBI" id="CHEBI:43474"/>
        <dbReference type="ChEBI" id="CHEBI:58189"/>
        <dbReference type="EC" id="3.6.5.3"/>
    </reaction>
    <physiologicalReaction direction="left-to-right" evidence="2">
        <dbReference type="Rhea" id="RHEA:19670"/>
    </physiologicalReaction>
</comment>
<comment type="subunit">
    <text evidence="2">Monomer.</text>
</comment>
<comment type="subcellular location">
    <subcellularLocation>
        <location evidence="2">Cytoplasm</location>
    </subcellularLocation>
</comment>
<comment type="similarity">
    <text evidence="2">Belongs to the TRAFAC class translation factor GTPase superfamily. Classic translation factor GTPase family. EF-Tu/EF-1A subfamily.</text>
</comment>
<feature type="chain" id="PRO_1000015721" description="Elongation factor Tu">
    <location>
        <begin position="1"/>
        <end position="396"/>
    </location>
</feature>
<feature type="domain" description="tr-type G">
    <location>
        <begin position="10"/>
        <end position="206"/>
    </location>
</feature>
<feature type="region of interest" description="G1" evidence="1">
    <location>
        <begin position="19"/>
        <end position="26"/>
    </location>
</feature>
<feature type="region of interest" description="G2" evidence="1">
    <location>
        <begin position="60"/>
        <end position="64"/>
    </location>
</feature>
<feature type="region of interest" description="G3" evidence="1">
    <location>
        <begin position="81"/>
        <end position="84"/>
    </location>
</feature>
<feature type="region of interest" description="G4" evidence="1">
    <location>
        <begin position="136"/>
        <end position="139"/>
    </location>
</feature>
<feature type="region of interest" description="G5" evidence="1">
    <location>
        <begin position="174"/>
        <end position="176"/>
    </location>
</feature>
<feature type="binding site" evidence="2">
    <location>
        <begin position="19"/>
        <end position="26"/>
    </location>
    <ligand>
        <name>GTP</name>
        <dbReference type="ChEBI" id="CHEBI:37565"/>
    </ligand>
</feature>
<feature type="binding site" evidence="2">
    <location>
        <position position="26"/>
    </location>
    <ligand>
        <name>Mg(2+)</name>
        <dbReference type="ChEBI" id="CHEBI:18420"/>
    </ligand>
</feature>
<feature type="binding site" evidence="2">
    <location>
        <begin position="81"/>
        <end position="85"/>
    </location>
    <ligand>
        <name>GTP</name>
        <dbReference type="ChEBI" id="CHEBI:37565"/>
    </ligand>
</feature>
<feature type="binding site" evidence="2">
    <location>
        <begin position="136"/>
        <end position="139"/>
    </location>
    <ligand>
        <name>GTP</name>
        <dbReference type="ChEBI" id="CHEBI:37565"/>
    </ligand>
</feature>
<protein>
    <recommendedName>
        <fullName evidence="2">Elongation factor Tu</fullName>
        <shortName evidence="2">EF-Tu</shortName>
        <ecNumber evidence="2">3.6.5.3</ecNumber>
    </recommendedName>
</protein>
<proteinExistence type="inferred from homology"/>
<evidence type="ECO:0000250" key="1"/>
<evidence type="ECO:0000255" key="2">
    <source>
        <dbReference type="HAMAP-Rule" id="MF_00118"/>
    </source>
</evidence>
<reference key="1">
    <citation type="journal article" date="2005" name="Science">
        <title>Genome streamlining in a cosmopolitan oceanic bacterium.</title>
        <authorList>
            <person name="Giovannoni S.J."/>
            <person name="Tripp H.J."/>
            <person name="Givan S."/>
            <person name="Podar M."/>
            <person name="Vergin K.L."/>
            <person name="Baptista D."/>
            <person name="Bibbs L."/>
            <person name="Eads J."/>
            <person name="Richardson T.H."/>
            <person name="Noordewier M."/>
            <person name="Rappe M.S."/>
            <person name="Short J.M."/>
            <person name="Carrington J.C."/>
            <person name="Mathur E.J."/>
        </authorList>
    </citation>
    <scope>NUCLEOTIDE SEQUENCE [LARGE SCALE GENOMIC DNA]</scope>
    <source>
        <strain>HTCC1062</strain>
    </source>
</reference>
<organism>
    <name type="scientific">Pelagibacter ubique (strain HTCC1062)</name>
    <dbReference type="NCBI Taxonomy" id="335992"/>
    <lineage>
        <taxon>Bacteria</taxon>
        <taxon>Pseudomonadati</taxon>
        <taxon>Pseudomonadota</taxon>
        <taxon>Alphaproteobacteria</taxon>
        <taxon>Candidatus Pelagibacterales</taxon>
        <taxon>Candidatus Pelagibacteraceae</taxon>
        <taxon>Candidatus Pelagibacter</taxon>
    </lineage>
</organism>
<sequence>MSKEKFVRNKPHCNIGTIGHVDHGKTTLTAAITITLAELGGGKAVAYDQIDKAPEEKERGITISTAHVEYETEKRHYAHVDCPGHADYVKNMITGAAQMDGAILVVNAADGPMPQTREHILLGRQVGIPAIVVYLNKVDQVDDKDMIELVEEEIRELLTSYKYPGDKTPIVKGSALAAVEGRDEEIGKNSIIELMKAVDEFIPQPTRDIDKPFLMPVEDVFSISGRGTVATGRIESGVIKTGEEVEIVGVTATKKSVCTGVEMFRKLLDSGEAGDNVGILLRGVERDDIQRGQVLCKPASITPHTKFEAQAYVLKKDEGGRHTPFFTKYRPQFYFRTTDVTGEVTLPAGTEMVMPGDDAKFTVTLITPIAMSEKLNFAIREGGRTVGAGVVTKIIE</sequence>
<gene>
    <name evidence="2" type="primary">tuf</name>
    <name type="ordered locus">SAR11_1130</name>
</gene>
<name>EFTU_PELUB</name>
<dbReference type="EC" id="3.6.5.3" evidence="2"/>
<dbReference type="EMBL" id="CP000084">
    <property type="protein sequence ID" value="AAZ21933.1"/>
    <property type="molecule type" value="Genomic_DNA"/>
</dbReference>
<dbReference type="RefSeq" id="WP_006996798.1">
    <property type="nucleotide sequence ID" value="NC_007205.1"/>
</dbReference>
<dbReference type="SMR" id="Q4FLK5"/>
<dbReference type="STRING" id="335992.SAR11_1130"/>
<dbReference type="GeneID" id="66295620"/>
<dbReference type="KEGG" id="pub:SAR11_1130"/>
<dbReference type="eggNOG" id="COG0050">
    <property type="taxonomic scope" value="Bacteria"/>
</dbReference>
<dbReference type="HOGENOM" id="CLU_007265_0_1_5"/>
<dbReference type="OrthoDB" id="9803139at2"/>
<dbReference type="Proteomes" id="UP000002528">
    <property type="component" value="Chromosome"/>
</dbReference>
<dbReference type="GO" id="GO:0005737">
    <property type="term" value="C:cytoplasm"/>
    <property type="evidence" value="ECO:0007669"/>
    <property type="project" value="UniProtKB-SubCell"/>
</dbReference>
<dbReference type="GO" id="GO:0005525">
    <property type="term" value="F:GTP binding"/>
    <property type="evidence" value="ECO:0007669"/>
    <property type="project" value="UniProtKB-UniRule"/>
</dbReference>
<dbReference type="GO" id="GO:0003924">
    <property type="term" value="F:GTPase activity"/>
    <property type="evidence" value="ECO:0007669"/>
    <property type="project" value="InterPro"/>
</dbReference>
<dbReference type="GO" id="GO:0097216">
    <property type="term" value="F:guanosine tetraphosphate binding"/>
    <property type="evidence" value="ECO:0007669"/>
    <property type="project" value="UniProtKB-ARBA"/>
</dbReference>
<dbReference type="GO" id="GO:0003746">
    <property type="term" value="F:translation elongation factor activity"/>
    <property type="evidence" value="ECO:0007669"/>
    <property type="project" value="UniProtKB-UniRule"/>
</dbReference>
<dbReference type="CDD" id="cd01884">
    <property type="entry name" value="EF_Tu"/>
    <property type="match status" value="1"/>
</dbReference>
<dbReference type="CDD" id="cd03697">
    <property type="entry name" value="EFTU_II"/>
    <property type="match status" value="1"/>
</dbReference>
<dbReference type="CDD" id="cd03707">
    <property type="entry name" value="EFTU_III"/>
    <property type="match status" value="1"/>
</dbReference>
<dbReference type="FunFam" id="2.40.30.10:FF:000001">
    <property type="entry name" value="Elongation factor Tu"/>
    <property type="match status" value="1"/>
</dbReference>
<dbReference type="FunFam" id="3.40.50.300:FF:000003">
    <property type="entry name" value="Elongation factor Tu"/>
    <property type="match status" value="1"/>
</dbReference>
<dbReference type="Gene3D" id="3.40.50.300">
    <property type="entry name" value="P-loop containing nucleotide triphosphate hydrolases"/>
    <property type="match status" value="1"/>
</dbReference>
<dbReference type="Gene3D" id="2.40.30.10">
    <property type="entry name" value="Translation factors"/>
    <property type="match status" value="2"/>
</dbReference>
<dbReference type="HAMAP" id="MF_00118_B">
    <property type="entry name" value="EF_Tu_B"/>
    <property type="match status" value="1"/>
</dbReference>
<dbReference type="InterPro" id="IPR041709">
    <property type="entry name" value="EF-Tu_GTP-bd"/>
</dbReference>
<dbReference type="InterPro" id="IPR050055">
    <property type="entry name" value="EF-Tu_GTPase"/>
</dbReference>
<dbReference type="InterPro" id="IPR004161">
    <property type="entry name" value="EFTu-like_2"/>
</dbReference>
<dbReference type="InterPro" id="IPR033720">
    <property type="entry name" value="EFTU_2"/>
</dbReference>
<dbReference type="InterPro" id="IPR031157">
    <property type="entry name" value="G_TR_CS"/>
</dbReference>
<dbReference type="InterPro" id="IPR027417">
    <property type="entry name" value="P-loop_NTPase"/>
</dbReference>
<dbReference type="InterPro" id="IPR005225">
    <property type="entry name" value="Small_GTP-bd"/>
</dbReference>
<dbReference type="InterPro" id="IPR000795">
    <property type="entry name" value="T_Tr_GTP-bd_dom"/>
</dbReference>
<dbReference type="InterPro" id="IPR009000">
    <property type="entry name" value="Transl_B-barrel_sf"/>
</dbReference>
<dbReference type="InterPro" id="IPR009001">
    <property type="entry name" value="Transl_elong_EF1A/Init_IF2_C"/>
</dbReference>
<dbReference type="InterPro" id="IPR004541">
    <property type="entry name" value="Transl_elong_EFTu/EF1A_bac/org"/>
</dbReference>
<dbReference type="InterPro" id="IPR004160">
    <property type="entry name" value="Transl_elong_EFTu/EF1A_C"/>
</dbReference>
<dbReference type="NCBIfam" id="TIGR00485">
    <property type="entry name" value="EF-Tu"/>
    <property type="match status" value="1"/>
</dbReference>
<dbReference type="NCBIfam" id="NF000766">
    <property type="entry name" value="PRK00049.1"/>
    <property type="match status" value="1"/>
</dbReference>
<dbReference type="NCBIfam" id="NF009372">
    <property type="entry name" value="PRK12735.1"/>
    <property type="match status" value="1"/>
</dbReference>
<dbReference type="NCBIfam" id="NF009373">
    <property type="entry name" value="PRK12736.1"/>
    <property type="match status" value="1"/>
</dbReference>
<dbReference type="NCBIfam" id="TIGR00231">
    <property type="entry name" value="small_GTP"/>
    <property type="match status" value="1"/>
</dbReference>
<dbReference type="PANTHER" id="PTHR43721:SF22">
    <property type="entry name" value="ELONGATION FACTOR TU, MITOCHONDRIAL"/>
    <property type="match status" value="1"/>
</dbReference>
<dbReference type="PANTHER" id="PTHR43721">
    <property type="entry name" value="ELONGATION FACTOR TU-RELATED"/>
    <property type="match status" value="1"/>
</dbReference>
<dbReference type="Pfam" id="PF00009">
    <property type="entry name" value="GTP_EFTU"/>
    <property type="match status" value="1"/>
</dbReference>
<dbReference type="Pfam" id="PF03144">
    <property type="entry name" value="GTP_EFTU_D2"/>
    <property type="match status" value="1"/>
</dbReference>
<dbReference type="Pfam" id="PF03143">
    <property type="entry name" value="GTP_EFTU_D3"/>
    <property type="match status" value="1"/>
</dbReference>
<dbReference type="PRINTS" id="PR00315">
    <property type="entry name" value="ELONGATNFCT"/>
</dbReference>
<dbReference type="SUPFAM" id="SSF50465">
    <property type="entry name" value="EF-Tu/eEF-1alpha/eIF2-gamma C-terminal domain"/>
    <property type="match status" value="1"/>
</dbReference>
<dbReference type="SUPFAM" id="SSF52540">
    <property type="entry name" value="P-loop containing nucleoside triphosphate hydrolases"/>
    <property type="match status" value="1"/>
</dbReference>
<dbReference type="SUPFAM" id="SSF50447">
    <property type="entry name" value="Translation proteins"/>
    <property type="match status" value="1"/>
</dbReference>
<dbReference type="PROSITE" id="PS00301">
    <property type="entry name" value="G_TR_1"/>
    <property type="match status" value="1"/>
</dbReference>
<dbReference type="PROSITE" id="PS51722">
    <property type="entry name" value="G_TR_2"/>
    <property type="match status" value="1"/>
</dbReference>
<keyword id="KW-0963">Cytoplasm</keyword>
<keyword id="KW-0251">Elongation factor</keyword>
<keyword id="KW-0342">GTP-binding</keyword>
<keyword id="KW-0378">Hydrolase</keyword>
<keyword id="KW-0460">Magnesium</keyword>
<keyword id="KW-0479">Metal-binding</keyword>
<keyword id="KW-0547">Nucleotide-binding</keyword>
<keyword id="KW-0648">Protein biosynthesis</keyword>
<keyword id="KW-1185">Reference proteome</keyword>